<gene>
    <name type="primary">suaB</name>
</gene>
<feature type="initiator methionine" description="Removed" evidence="2">
    <location>
        <position position="1"/>
    </location>
</feature>
<feature type="chain" id="PRO_0000159313" description="Ferredoxin-1">
    <location>
        <begin position="2"/>
        <end position="69"/>
    </location>
</feature>
<feature type="binding site" evidence="1">
    <location>
        <position position="12"/>
    </location>
    <ligand>
        <name>[3Fe-4S] cluster</name>
        <dbReference type="ChEBI" id="CHEBI:21137"/>
    </ligand>
</feature>
<feature type="binding site" evidence="1">
    <location>
        <position position="18"/>
    </location>
    <ligand>
        <name>[3Fe-4S] cluster</name>
        <dbReference type="ChEBI" id="CHEBI:21137"/>
    </ligand>
</feature>
<feature type="binding site" evidence="1">
    <location>
        <position position="57"/>
    </location>
    <ligand>
        <name>[3Fe-4S] cluster</name>
        <dbReference type="ChEBI" id="CHEBI:21137"/>
    </ligand>
</feature>
<name>FER1_STRGO</name>
<dbReference type="EMBL" id="M32238">
    <property type="protein sequence ID" value="AAA26824.1"/>
    <property type="molecule type" value="Genomic_DNA"/>
</dbReference>
<dbReference type="PIR" id="A37915">
    <property type="entry name" value="A37915"/>
</dbReference>
<dbReference type="SMR" id="P18324"/>
<dbReference type="GO" id="GO:0051538">
    <property type="term" value="F:3 iron, 4 sulfur cluster binding"/>
    <property type="evidence" value="ECO:0007669"/>
    <property type="project" value="UniProtKB-KW"/>
</dbReference>
<dbReference type="GO" id="GO:0009055">
    <property type="term" value="F:electron transfer activity"/>
    <property type="evidence" value="ECO:0007669"/>
    <property type="project" value="InterPro"/>
</dbReference>
<dbReference type="GO" id="GO:0005506">
    <property type="term" value="F:iron ion binding"/>
    <property type="evidence" value="ECO:0007669"/>
    <property type="project" value="InterPro"/>
</dbReference>
<dbReference type="Gene3D" id="3.30.70.20">
    <property type="match status" value="1"/>
</dbReference>
<dbReference type="InterPro" id="IPR001080">
    <property type="entry name" value="3Fe4S_ferredoxin"/>
</dbReference>
<dbReference type="InterPro" id="IPR010693">
    <property type="entry name" value="Divergent_4Fe-4S_mono-cluster"/>
</dbReference>
<dbReference type="InterPro" id="IPR051269">
    <property type="entry name" value="Fe-S_cluster_ET"/>
</dbReference>
<dbReference type="PANTHER" id="PTHR36923">
    <property type="entry name" value="FERREDOXIN"/>
    <property type="match status" value="1"/>
</dbReference>
<dbReference type="PANTHER" id="PTHR36923:SF3">
    <property type="entry name" value="FERREDOXIN"/>
    <property type="match status" value="1"/>
</dbReference>
<dbReference type="Pfam" id="PF06902">
    <property type="entry name" value="Fer4_19"/>
    <property type="match status" value="1"/>
</dbReference>
<dbReference type="PRINTS" id="PR00352">
    <property type="entry name" value="3FE4SFRDOXIN"/>
</dbReference>
<dbReference type="SUPFAM" id="SSF54862">
    <property type="entry name" value="4Fe-4S ferredoxins"/>
    <property type="match status" value="1"/>
</dbReference>
<evidence type="ECO:0000250" key="1"/>
<evidence type="ECO:0000269" key="2">
    <source>
    </source>
</evidence>
<accession>P18324</accession>
<proteinExistence type="evidence at protein level"/>
<protein>
    <recommendedName>
        <fullName>Ferredoxin-1</fullName>
        <shortName>Fd-1</shortName>
    </recommendedName>
</protein>
<sequence length="69" mass="7176">MTMRVSADRTVCVGAGLCALTAPGVFDQDDDGIVTVLTAEPAADDDRRTAREAGHLCPSGAVRVVEDTE</sequence>
<organism>
    <name type="scientific">Streptomyces griseolus</name>
    <dbReference type="NCBI Taxonomy" id="1909"/>
    <lineage>
        <taxon>Bacteria</taxon>
        <taxon>Bacillati</taxon>
        <taxon>Actinomycetota</taxon>
        <taxon>Actinomycetes</taxon>
        <taxon>Kitasatosporales</taxon>
        <taxon>Streptomycetaceae</taxon>
        <taxon>Streptomyces</taxon>
    </lineage>
</organism>
<comment type="function">
    <text>Electron transport protein for the cytochrome P-450-SU1 system.</text>
</comment>
<comment type="cofactor">
    <cofactor>
        <name>[3Fe-4S] cluster</name>
        <dbReference type="ChEBI" id="CHEBI:21137"/>
    </cofactor>
    <text>Binds 1 [3Fe-4S] cluster.</text>
</comment>
<comment type="induction">
    <text>By herbicides.</text>
</comment>
<reference key="1">
    <citation type="journal article" date="1991" name="Biochemistry">
        <title>Ferredoxins from two sulfonylurea herbicide monooxygenase systems in Streptomyces griseolus.</title>
        <authorList>
            <person name="O'Keefe D.P."/>
            <person name="Gibson K.J."/>
            <person name="Emptage M.H."/>
            <person name="Lenstra R."/>
            <person name="Romesser J.A."/>
            <person name="Litle P.J."/>
            <person name="Omer C.A."/>
        </authorList>
    </citation>
    <scope>NUCLEOTIDE SEQUENCE [GENOMIC DNA]</scope>
    <scope>PROTEIN SEQUENCE OF 2-44</scope>
    <source>
        <strain>ATCC 11796 / DSM 40854</strain>
    </source>
</reference>
<keyword id="KW-0003">3Fe-4S</keyword>
<keyword id="KW-0903">Direct protein sequencing</keyword>
<keyword id="KW-0249">Electron transport</keyword>
<keyword id="KW-0408">Iron</keyword>
<keyword id="KW-0411">Iron-sulfur</keyword>
<keyword id="KW-0479">Metal-binding</keyword>
<keyword id="KW-0813">Transport</keyword>